<evidence type="ECO:0000250" key="1">
    <source>
        <dbReference type="UniProtKB" id="P61165"/>
    </source>
</evidence>
<evidence type="ECO:0000255" key="2"/>
<evidence type="ECO:0000305" key="3"/>
<name>TM258_XENTR</name>
<dbReference type="EMBL" id="BC077679">
    <property type="protein sequence ID" value="AAH77679.1"/>
    <property type="molecule type" value="mRNA"/>
</dbReference>
<dbReference type="RefSeq" id="NP_001005138.1">
    <property type="nucleotide sequence ID" value="NM_001005138.2"/>
</dbReference>
<dbReference type="SMR" id="Q6DDB3"/>
<dbReference type="FunCoup" id="Q6DDB3">
    <property type="interactions" value="794"/>
</dbReference>
<dbReference type="STRING" id="8364.ENSXETP00000036237"/>
<dbReference type="PaxDb" id="8364-ENSXETP00000057416"/>
<dbReference type="DNASU" id="448722"/>
<dbReference type="GeneID" id="448722"/>
<dbReference type="KEGG" id="xtr:448722"/>
<dbReference type="AGR" id="Xenbase:XB-GENE-1005560"/>
<dbReference type="CTD" id="746"/>
<dbReference type="Xenbase" id="XB-GENE-1005560">
    <property type="gene designation" value="tmem258"/>
</dbReference>
<dbReference type="eggNOG" id="KOG4452">
    <property type="taxonomic scope" value="Eukaryota"/>
</dbReference>
<dbReference type="HOGENOM" id="CLU_180449_0_0_1"/>
<dbReference type="InParanoid" id="Q6DDB3"/>
<dbReference type="OMA" id="MERYVGP"/>
<dbReference type="OrthoDB" id="18408at2759"/>
<dbReference type="PhylomeDB" id="Q6DDB3"/>
<dbReference type="TreeFam" id="TF300295"/>
<dbReference type="UniPathway" id="UPA00378"/>
<dbReference type="Proteomes" id="UP000008143">
    <property type="component" value="Chromosome 4"/>
</dbReference>
<dbReference type="GO" id="GO:0005737">
    <property type="term" value="C:cytoplasm"/>
    <property type="evidence" value="ECO:0000250"/>
    <property type="project" value="UniProtKB"/>
</dbReference>
<dbReference type="GO" id="GO:0016020">
    <property type="term" value="C:membrane"/>
    <property type="evidence" value="ECO:0000250"/>
    <property type="project" value="UniProtKB"/>
</dbReference>
<dbReference type="GO" id="GO:0008250">
    <property type="term" value="C:oligosaccharyltransferase complex"/>
    <property type="evidence" value="ECO:0007669"/>
    <property type="project" value="InterPro"/>
</dbReference>
<dbReference type="GO" id="GO:0006486">
    <property type="term" value="P:protein glycosylation"/>
    <property type="evidence" value="ECO:0007669"/>
    <property type="project" value="UniProtKB-UniPathway"/>
</dbReference>
<dbReference type="InterPro" id="IPR007915">
    <property type="entry name" value="TMEM258/Ost5"/>
</dbReference>
<dbReference type="PANTHER" id="PTHR13636">
    <property type="entry name" value="TRANSMEMBRANE PROTEIN 258"/>
    <property type="match status" value="1"/>
</dbReference>
<dbReference type="Pfam" id="PF05251">
    <property type="entry name" value="Ost5"/>
    <property type="match status" value="1"/>
</dbReference>
<accession>Q6DDB3</accession>
<gene>
    <name evidence="1" type="primary">tmem258</name>
</gene>
<comment type="function">
    <text evidence="1">Subunit of the oligosaccharyl transferase (OST) complex that catalyzes the initial transfer of a defined glycan (Glc(3)Man(9)GlcNAc(2) in eukaryotes) from the lipid carrier dolichol-pyrophosphate to an asparagine residue within an Asn-X-Ser/Thr consensus motif in nascent polypeptide chains, the first step in protein N-glycosylation. N-glycosylation occurs cotranslationally and the complex associates with the Sec61 complex at the channel-forming translocon complex that mediates protein translocation across the endoplasmic reticulum (ER). All subunits are required for a maximal enzyme activity.</text>
</comment>
<comment type="pathway">
    <text evidence="1">Protein modification; protein glycosylation.</text>
</comment>
<comment type="subunit">
    <text evidence="1">Component of the oligosaccharyltransferase (OST) complex.</text>
</comment>
<comment type="subcellular location">
    <subcellularLocation>
        <location evidence="1">Membrane</location>
        <topology evidence="1">Multi-pass membrane protein</topology>
    </subcellularLocation>
    <subcellularLocation>
        <location evidence="1">Endoplasmic reticulum</location>
    </subcellularLocation>
    <subcellularLocation>
        <location evidence="1">Cytoplasm</location>
    </subcellularLocation>
</comment>
<comment type="similarity">
    <text evidence="3">Belongs to the OST5 family.</text>
</comment>
<feature type="chain" id="PRO_0000235835" description="Dolichyl-diphosphooligosaccharide--protein glycosyltransferase subunit TMEM258">
    <location>
        <begin position="1"/>
        <end position="79"/>
    </location>
</feature>
<feature type="transmembrane region" description="Helical" evidence="2">
    <location>
        <begin position="17"/>
        <end position="37"/>
    </location>
</feature>
<feature type="transmembrane region" description="Helical" evidence="2">
    <location>
        <begin position="55"/>
        <end position="75"/>
    </location>
</feature>
<proteinExistence type="inferred from homology"/>
<reference key="1">
    <citation type="submission" date="2004-07" db="EMBL/GenBank/DDBJ databases">
        <authorList>
            <consortium name="NIH - Xenopus Gene Collection (XGC) project"/>
        </authorList>
    </citation>
    <scope>NUCLEOTIDE SEQUENCE [LARGE SCALE MRNA]</scope>
    <source>
        <tissue>Embryo</tissue>
    </source>
</reference>
<sequence>MELEAMSRYTSPVNPAVFPHLTVVLLAIGMFFTAWFFVYEVTSTKYTRDVYKELLISLVASLFMGFGVLFLLLWVGIYV</sequence>
<protein>
    <recommendedName>
        <fullName>Dolichyl-diphosphooligosaccharide--protein glycosyltransferase subunit TMEM258</fullName>
        <shortName>Oligosaccharyl transferase subunit TMEM258</shortName>
    </recommendedName>
    <alternativeName>
        <fullName evidence="1">Transmembrane protein 258</fullName>
    </alternativeName>
</protein>
<organism>
    <name type="scientific">Xenopus tropicalis</name>
    <name type="common">Western clawed frog</name>
    <name type="synonym">Silurana tropicalis</name>
    <dbReference type="NCBI Taxonomy" id="8364"/>
    <lineage>
        <taxon>Eukaryota</taxon>
        <taxon>Metazoa</taxon>
        <taxon>Chordata</taxon>
        <taxon>Craniata</taxon>
        <taxon>Vertebrata</taxon>
        <taxon>Euteleostomi</taxon>
        <taxon>Amphibia</taxon>
        <taxon>Batrachia</taxon>
        <taxon>Anura</taxon>
        <taxon>Pipoidea</taxon>
        <taxon>Pipidae</taxon>
        <taxon>Xenopodinae</taxon>
        <taxon>Xenopus</taxon>
        <taxon>Silurana</taxon>
    </lineage>
</organism>
<keyword id="KW-0963">Cytoplasm</keyword>
<keyword id="KW-0256">Endoplasmic reticulum</keyword>
<keyword id="KW-0472">Membrane</keyword>
<keyword id="KW-1185">Reference proteome</keyword>
<keyword id="KW-0812">Transmembrane</keyword>
<keyword id="KW-1133">Transmembrane helix</keyword>